<feature type="signal peptide" evidence="4">
    <location>
        <begin position="1"/>
        <end position="33"/>
    </location>
</feature>
<feature type="chain" id="PRO_0000407859" description="Glutaminyl-peptide cyclotransferase">
    <location>
        <begin position="34"/>
        <end position="368"/>
    </location>
</feature>
<feature type="active site" description="Proton acceptor" evidence="3">
    <location>
        <position position="207"/>
    </location>
</feature>
<feature type="active site" description="Proton acceptor" evidence="3">
    <location>
        <position position="254"/>
    </location>
</feature>
<feature type="binding site" evidence="3">
    <location>
        <position position="164"/>
    </location>
    <ligand>
        <name>Zn(2+)</name>
        <dbReference type="ChEBI" id="CHEBI:29105"/>
    </ligand>
</feature>
<feature type="binding site" evidence="3">
    <location>
        <position position="208"/>
    </location>
    <ligand>
        <name>Zn(2+)</name>
        <dbReference type="ChEBI" id="CHEBI:29105"/>
    </ligand>
</feature>
<feature type="binding site" evidence="3">
    <location>
        <position position="336"/>
    </location>
    <ligand>
        <name>Zn(2+)</name>
        <dbReference type="ChEBI" id="CHEBI:29105"/>
    </ligand>
</feature>
<feature type="glycosylation site" description="N-linked (GlcNAc...) asparagine" evidence="4">
    <location>
        <position position="53"/>
    </location>
</feature>
<feature type="glycosylation site" description="N-linked (GlcNAc...) asparagine" evidence="4">
    <location>
        <position position="292"/>
    </location>
</feature>
<feature type="glycosylation site" description="N-linked (GlcNAc...) asparagine" evidence="4">
    <location>
        <position position="352"/>
    </location>
</feature>
<feature type="disulfide bond" evidence="3">
    <location>
        <begin position="143"/>
        <end position="169"/>
    </location>
</feature>
<evidence type="ECO:0000250" key="1"/>
<evidence type="ECO:0000250" key="2">
    <source>
        <dbReference type="UniProtKB" id="B7QK46"/>
    </source>
</evidence>
<evidence type="ECO:0000250" key="3">
    <source>
        <dbReference type="UniProtKB" id="Q16769"/>
    </source>
</evidence>
<evidence type="ECO:0000255" key="4"/>
<evidence type="ECO:0000305" key="5"/>
<reference key="1">
    <citation type="submission" date="2001-04" db="EMBL/GenBank/DDBJ databases">
        <title>Agkistrodon blomhoffi mRNA for glutaminyl cyclase precursor, complete cds.</title>
        <authorList>
            <person name="Murayama N."/>
        </authorList>
    </citation>
    <scope>NUCLEOTIDE SEQUENCE [MRNA]</scope>
    <source>
        <tissue>Venom gland</tissue>
    </source>
</reference>
<gene>
    <name type="primary">QPCT</name>
</gene>
<accession>Q90YA8</accession>
<protein>
    <recommendedName>
        <fullName>Glutaminyl-peptide cyclotransferase</fullName>
        <ecNumber>2.3.2.5</ecNumber>
    </recommendedName>
    <alternativeName>
        <fullName>Glutaminyl cyclase</fullName>
        <shortName>QC</shortName>
    </alternativeName>
    <alternativeName>
        <fullName>Glutaminyl-tRNA cyclotransferase</fullName>
    </alternativeName>
</protein>
<comment type="function">
    <text evidence="1">Responsible for the biosynthesis of pyroglutamyl peptides. Has a bias against acidic and tryptophan residues adjacent to the N-terminal glutaminyl residue and a lack of importance of chain length after the second residue. Also catalyzes N-terminal pyroglutamate formation (By similarity).</text>
</comment>
<comment type="catalytic activity">
    <reaction>
        <text>N-terminal L-glutaminyl-[peptide] = N-terminal 5-oxo-L-prolyl-[peptide] + NH4(+)</text>
        <dbReference type="Rhea" id="RHEA:23652"/>
        <dbReference type="Rhea" id="RHEA-COMP:11736"/>
        <dbReference type="Rhea" id="RHEA-COMP:11846"/>
        <dbReference type="ChEBI" id="CHEBI:28938"/>
        <dbReference type="ChEBI" id="CHEBI:64722"/>
        <dbReference type="ChEBI" id="CHEBI:87215"/>
        <dbReference type="EC" id="2.3.2.5"/>
    </reaction>
</comment>
<comment type="subcellular location">
    <subcellularLocation>
        <location evidence="1">Secreted</location>
    </subcellularLocation>
</comment>
<comment type="tissue specificity">
    <text>Expressed by the venom gland.</text>
</comment>
<comment type="similarity">
    <text evidence="5">Belongs to the glutaminyl-peptide cyclotransferase family.</text>
</comment>
<comment type="caution">
    <text evidence="2 3">It is unclear whether this protein requires a metal cofactor for catalysis. It was originally proposed to be a Zn(2+)-dependent metalloenzyme based on structural similarities to bacterial aminopeptidases and the observation that it can bind Zn(2+) ions, typically in a 1:1 stoichiometry (By similarity). However, a recent study suggests a Zn(2+)-independent catalytic mechanism (By similarity).</text>
</comment>
<name>QPCT_GLOBL</name>
<sequence>MARERRDSKAATFFCLAWALCLALPGFPQHVSGREDRVDWTQEKYSHRPTILNATCILQVTSQTNVNRMWQNDLHPILIERYPGSPGSYAVRQHIKHRLQGLQAGWLVEEDTFQSHTPYGYRTFSNIISTLNPLAKRHLVIACHYDSKYFPPQLDGKVFVGATDSAVPCAMMLELARSLDRQLSFLKQSSLPPKADLSLKLIFFDGEEAFVRWSPSDSLYGSRSLAQKMASTPHPPGARNTYQIQGIDLFVLLDLIGARNPVFPVYFLNTARWFGRLEAIEQNLYDLGLLNNYSSERQYFRSNLRRHPVEDDHIPFLRRGVPILHLIPSPFPRVWHTMEDNEENLDKPTIDNLSKILQVFVLEYLNLG</sequence>
<proteinExistence type="evidence at transcript level"/>
<organism>
    <name type="scientific">Gloydius blomhoffii</name>
    <name type="common">Mamushi</name>
    <name type="synonym">Agkistrodon halys blomhoffi</name>
    <dbReference type="NCBI Taxonomy" id="242054"/>
    <lineage>
        <taxon>Eukaryota</taxon>
        <taxon>Metazoa</taxon>
        <taxon>Chordata</taxon>
        <taxon>Craniata</taxon>
        <taxon>Vertebrata</taxon>
        <taxon>Euteleostomi</taxon>
        <taxon>Lepidosauria</taxon>
        <taxon>Squamata</taxon>
        <taxon>Bifurcata</taxon>
        <taxon>Unidentata</taxon>
        <taxon>Episquamata</taxon>
        <taxon>Toxicofera</taxon>
        <taxon>Serpentes</taxon>
        <taxon>Colubroidea</taxon>
        <taxon>Viperidae</taxon>
        <taxon>Crotalinae</taxon>
        <taxon>Gloydius</taxon>
    </lineage>
</organism>
<keyword id="KW-0012">Acyltransferase</keyword>
<keyword id="KW-1015">Disulfide bond</keyword>
<keyword id="KW-0325">Glycoprotein</keyword>
<keyword id="KW-0479">Metal-binding</keyword>
<keyword id="KW-0964">Secreted</keyword>
<keyword id="KW-0732">Signal</keyword>
<keyword id="KW-0808">Transferase</keyword>
<keyword id="KW-0862">Zinc</keyword>
<dbReference type="EC" id="2.3.2.5"/>
<dbReference type="EMBL" id="AB059426">
    <property type="protein sequence ID" value="BAB69586.1"/>
    <property type="molecule type" value="mRNA"/>
</dbReference>
<dbReference type="SMR" id="Q90YA8"/>
<dbReference type="MEROPS" id="M28.974"/>
<dbReference type="GlyCosmos" id="Q90YA8">
    <property type="glycosylation" value="3 sites, No reported glycans"/>
</dbReference>
<dbReference type="GO" id="GO:0005576">
    <property type="term" value="C:extracellular region"/>
    <property type="evidence" value="ECO:0007669"/>
    <property type="project" value="UniProtKB-SubCell"/>
</dbReference>
<dbReference type="GO" id="GO:0016603">
    <property type="term" value="F:glutaminyl-peptide cyclotransferase activity"/>
    <property type="evidence" value="ECO:0000250"/>
    <property type="project" value="UniProtKB"/>
</dbReference>
<dbReference type="GO" id="GO:0008270">
    <property type="term" value="F:zinc ion binding"/>
    <property type="evidence" value="ECO:0000250"/>
    <property type="project" value="UniProtKB"/>
</dbReference>
<dbReference type="GO" id="GO:0017186">
    <property type="term" value="P:peptidyl-pyroglutamic acid biosynthetic process, using glutaminyl-peptide cyclotransferase"/>
    <property type="evidence" value="ECO:0000250"/>
    <property type="project" value="UniProtKB"/>
</dbReference>
<dbReference type="CDD" id="cd03880">
    <property type="entry name" value="M28_QC_like"/>
    <property type="match status" value="1"/>
</dbReference>
<dbReference type="FunFam" id="3.40.630.10:FF:000029">
    <property type="entry name" value="Glutaminyl-peptide cyclotransferase"/>
    <property type="match status" value="1"/>
</dbReference>
<dbReference type="Gene3D" id="3.40.630.10">
    <property type="entry name" value="Zn peptidases"/>
    <property type="match status" value="1"/>
</dbReference>
<dbReference type="InterPro" id="IPR037457">
    <property type="entry name" value="M28_QC"/>
</dbReference>
<dbReference type="InterPro" id="IPR007484">
    <property type="entry name" value="Peptidase_M28"/>
</dbReference>
<dbReference type="InterPro" id="IPR040234">
    <property type="entry name" value="QC/QCL"/>
</dbReference>
<dbReference type="PANTHER" id="PTHR12283">
    <property type="entry name" value="GLUTAMINYL-PEPTIDE CYCLOTRANSFERASE"/>
    <property type="match status" value="1"/>
</dbReference>
<dbReference type="PANTHER" id="PTHR12283:SF5">
    <property type="entry name" value="GLUTAMINYL-PEPTIDE CYCLOTRANSFERASE"/>
    <property type="match status" value="1"/>
</dbReference>
<dbReference type="Pfam" id="PF04389">
    <property type="entry name" value="Peptidase_M28"/>
    <property type="match status" value="1"/>
</dbReference>
<dbReference type="SUPFAM" id="SSF53187">
    <property type="entry name" value="Zn-dependent exopeptidases"/>
    <property type="match status" value="1"/>
</dbReference>